<reference key="1">
    <citation type="journal article" date="2006" name="J. Bacteriol.">
        <title>Genome sequence of Aeromonas hydrophila ATCC 7966T: jack of all trades.</title>
        <authorList>
            <person name="Seshadri R."/>
            <person name="Joseph S.W."/>
            <person name="Chopra A.K."/>
            <person name="Sha J."/>
            <person name="Shaw J."/>
            <person name="Graf J."/>
            <person name="Haft D.H."/>
            <person name="Wu M."/>
            <person name="Ren Q."/>
            <person name="Rosovitz M.J."/>
            <person name="Madupu R."/>
            <person name="Tallon L."/>
            <person name="Kim M."/>
            <person name="Jin S."/>
            <person name="Vuong H."/>
            <person name="Stine O.C."/>
            <person name="Ali A."/>
            <person name="Horneman A.J."/>
            <person name="Heidelberg J.F."/>
        </authorList>
    </citation>
    <scope>NUCLEOTIDE SEQUENCE [LARGE SCALE GENOMIC DNA]</scope>
    <source>
        <strain>ATCC 7966 / DSM 30187 / BCRC 13018 / CCUG 14551 / JCM 1027 / KCTC 2358 / NCIMB 9240 / NCTC 8049</strain>
    </source>
</reference>
<feature type="chain" id="PRO_1000049479" description="Glycerol-3-phosphate dehydrogenase [NAD(P)+]">
    <location>
        <begin position="1"/>
        <end position="334"/>
    </location>
</feature>
<feature type="active site" description="Proton acceptor" evidence="1">
    <location>
        <position position="194"/>
    </location>
</feature>
<feature type="binding site" evidence="1">
    <location>
        <position position="14"/>
    </location>
    <ligand>
        <name>NADPH</name>
        <dbReference type="ChEBI" id="CHEBI:57783"/>
    </ligand>
</feature>
<feature type="binding site" evidence="1">
    <location>
        <position position="15"/>
    </location>
    <ligand>
        <name>NADPH</name>
        <dbReference type="ChEBI" id="CHEBI:57783"/>
    </ligand>
</feature>
<feature type="binding site" evidence="1">
    <location>
        <position position="35"/>
    </location>
    <ligand>
        <name>NADPH</name>
        <dbReference type="ChEBI" id="CHEBI:57783"/>
    </ligand>
</feature>
<feature type="binding site" evidence="1">
    <location>
        <position position="109"/>
    </location>
    <ligand>
        <name>NADPH</name>
        <dbReference type="ChEBI" id="CHEBI:57783"/>
    </ligand>
</feature>
<feature type="binding site" evidence="1">
    <location>
        <position position="109"/>
    </location>
    <ligand>
        <name>sn-glycerol 3-phosphate</name>
        <dbReference type="ChEBI" id="CHEBI:57597"/>
    </ligand>
</feature>
<feature type="binding site" evidence="1">
    <location>
        <position position="138"/>
    </location>
    <ligand>
        <name>sn-glycerol 3-phosphate</name>
        <dbReference type="ChEBI" id="CHEBI:57597"/>
    </ligand>
</feature>
<feature type="binding site" evidence="1">
    <location>
        <position position="140"/>
    </location>
    <ligand>
        <name>sn-glycerol 3-phosphate</name>
        <dbReference type="ChEBI" id="CHEBI:57597"/>
    </ligand>
</feature>
<feature type="binding site" evidence="1">
    <location>
        <position position="142"/>
    </location>
    <ligand>
        <name>NADPH</name>
        <dbReference type="ChEBI" id="CHEBI:57783"/>
    </ligand>
</feature>
<feature type="binding site" evidence="1">
    <location>
        <position position="194"/>
    </location>
    <ligand>
        <name>sn-glycerol 3-phosphate</name>
        <dbReference type="ChEBI" id="CHEBI:57597"/>
    </ligand>
</feature>
<feature type="binding site" evidence="1">
    <location>
        <position position="247"/>
    </location>
    <ligand>
        <name>sn-glycerol 3-phosphate</name>
        <dbReference type="ChEBI" id="CHEBI:57597"/>
    </ligand>
</feature>
<feature type="binding site" evidence="1">
    <location>
        <position position="257"/>
    </location>
    <ligand>
        <name>sn-glycerol 3-phosphate</name>
        <dbReference type="ChEBI" id="CHEBI:57597"/>
    </ligand>
</feature>
<feature type="binding site" evidence="1">
    <location>
        <position position="258"/>
    </location>
    <ligand>
        <name>NADPH</name>
        <dbReference type="ChEBI" id="CHEBI:57783"/>
    </ligand>
</feature>
<feature type="binding site" evidence="1">
    <location>
        <position position="258"/>
    </location>
    <ligand>
        <name>sn-glycerol 3-phosphate</name>
        <dbReference type="ChEBI" id="CHEBI:57597"/>
    </ligand>
</feature>
<feature type="binding site" evidence="1">
    <location>
        <position position="259"/>
    </location>
    <ligand>
        <name>sn-glycerol 3-phosphate</name>
        <dbReference type="ChEBI" id="CHEBI:57597"/>
    </ligand>
</feature>
<feature type="binding site" evidence="1">
    <location>
        <position position="282"/>
    </location>
    <ligand>
        <name>NADPH</name>
        <dbReference type="ChEBI" id="CHEBI:57783"/>
    </ligand>
</feature>
<feature type="binding site" evidence="1">
    <location>
        <position position="284"/>
    </location>
    <ligand>
        <name>NADPH</name>
        <dbReference type="ChEBI" id="CHEBI:57783"/>
    </ligand>
</feature>
<dbReference type="EC" id="1.1.1.94" evidence="1"/>
<dbReference type="EMBL" id="CP000462">
    <property type="protein sequence ID" value="ABK36018.1"/>
    <property type="molecule type" value="Genomic_DNA"/>
</dbReference>
<dbReference type="RefSeq" id="WP_011704301.1">
    <property type="nucleotide sequence ID" value="NC_008570.1"/>
</dbReference>
<dbReference type="RefSeq" id="YP_854826.1">
    <property type="nucleotide sequence ID" value="NC_008570.1"/>
</dbReference>
<dbReference type="SMR" id="A0KF08"/>
<dbReference type="STRING" id="380703.AHA_0296"/>
<dbReference type="EnsemblBacteria" id="ABK36018">
    <property type="protein sequence ID" value="ABK36018"/>
    <property type="gene ID" value="AHA_0296"/>
</dbReference>
<dbReference type="GeneID" id="4490454"/>
<dbReference type="KEGG" id="aha:AHA_0296"/>
<dbReference type="PATRIC" id="fig|380703.7.peg.284"/>
<dbReference type="eggNOG" id="COG0240">
    <property type="taxonomic scope" value="Bacteria"/>
</dbReference>
<dbReference type="HOGENOM" id="CLU_033449_0_2_6"/>
<dbReference type="OrthoDB" id="9812273at2"/>
<dbReference type="UniPathway" id="UPA00940"/>
<dbReference type="Proteomes" id="UP000000756">
    <property type="component" value="Chromosome"/>
</dbReference>
<dbReference type="GO" id="GO:0005829">
    <property type="term" value="C:cytosol"/>
    <property type="evidence" value="ECO:0007669"/>
    <property type="project" value="TreeGrafter"/>
</dbReference>
<dbReference type="GO" id="GO:0047952">
    <property type="term" value="F:glycerol-3-phosphate dehydrogenase [NAD(P)+] activity"/>
    <property type="evidence" value="ECO:0007669"/>
    <property type="project" value="UniProtKB-UniRule"/>
</dbReference>
<dbReference type="GO" id="GO:0051287">
    <property type="term" value="F:NAD binding"/>
    <property type="evidence" value="ECO:0007669"/>
    <property type="project" value="InterPro"/>
</dbReference>
<dbReference type="GO" id="GO:0005975">
    <property type="term" value="P:carbohydrate metabolic process"/>
    <property type="evidence" value="ECO:0007669"/>
    <property type="project" value="InterPro"/>
</dbReference>
<dbReference type="GO" id="GO:0046167">
    <property type="term" value="P:glycerol-3-phosphate biosynthetic process"/>
    <property type="evidence" value="ECO:0007669"/>
    <property type="project" value="UniProtKB-UniRule"/>
</dbReference>
<dbReference type="GO" id="GO:0046168">
    <property type="term" value="P:glycerol-3-phosphate catabolic process"/>
    <property type="evidence" value="ECO:0007669"/>
    <property type="project" value="InterPro"/>
</dbReference>
<dbReference type="GO" id="GO:0046474">
    <property type="term" value="P:glycerophospholipid biosynthetic process"/>
    <property type="evidence" value="ECO:0007669"/>
    <property type="project" value="TreeGrafter"/>
</dbReference>
<dbReference type="FunFam" id="1.10.1040.10:FF:000001">
    <property type="entry name" value="Glycerol-3-phosphate dehydrogenase [NAD(P)+]"/>
    <property type="match status" value="1"/>
</dbReference>
<dbReference type="FunFam" id="3.40.50.720:FF:000019">
    <property type="entry name" value="Glycerol-3-phosphate dehydrogenase [NAD(P)+]"/>
    <property type="match status" value="1"/>
</dbReference>
<dbReference type="Gene3D" id="1.10.1040.10">
    <property type="entry name" value="N-(1-d-carboxylethyl)-l-norvaline Dehydrogenase, domain 2"/>
    <property type="match status" value="1"/>
</dbReference>
<dbReference type="Gene3D" id="3.40.50.720">
    <property type="entry name" value="NAD(P)-binding Rossmann-like Domain"/>
    <property type="match status" value="1"/>
</dbReference>
<dbReference type="HAMAP" id="MF_00394">
    <property type="entry name" value="NAD_Glyc3P_dehydrog"/>
    <property type="match status" value="1"/>
</dbReference>
<dbReference type="InterPro" id="IPR008927">
    <property type="entry name" value="6-PGluconate_DH-like_C_sf"/>
</dbReference>
<dbReference type="InterPro" id="IPR013328">
    <property type="entry name" value="6PGD_dom2"/>
</dbReference>
<dbReference type="InterPro" id="IPR006168">
    <property type="entry name" value="G3P_DH_NAD-dep"/>
</dbReference>
<dbReference type="InterPro" id="IPR006109">
    <property type="entry name" value="G3P_DH_NAD-dep_C"/>
</dbReference>
<dbReference type="InterPro" id="IPR011128">
    <property type="entry name" value="G3P_DH_NAD-dep_N"/>
</dbReference>
<dbReference type="InterPro" id="IPR036291">
    <property type="entry name" value="NAD(P)-bd_dom_sf"/>
</dbReference>
<dbReference type="NCBIfam" id="NF000939">
    <property type="entry name" value="PRK00094.1-1"/>
    <property type="match status" value="1"/>
</dbReference>
<dbReference type="NCBIfam" id="NF000940">
    <property type="entry name" value="PRK00094.1-2"/>
    <property type="match status" value="1"/>
</dbReference>
<dbReference type="NCBIfam" id="NF000942">
    <property type="entry name" value="PRK00094.1-4"/>
    <property type="match status" value="1"/>
</dbReference>
<dbReference type="PANTHER" id="PTHR11728">
    <property type="entry name" value="GLYCEROL-3-PHOSPHATE DEHYDROGENASE"/>
    <property type="match status" value="1"/>
</dbReference>
<dbReference type="PANTHER" id="PTHR11728:SF1">
    <property type="entry name" value="GLYCEROL-3-PHOSPHATE DEHYDROGENASE [NAD(+)] 2, CHLOROPLASTIC"/>
    <property type="match status" value="1"/>
</dbReference>
<dbReference type="Pfam" id="PF07479">
    <property type="entry name" value="NAD_Gly3P_dh_C"/>
    <property type="match status" value="1"/>
</dbReference>
<dbReference type="Pfam" id="PF01210">
    <property type="entry name" value="NAD_Gly3P_dh_N"/>
    <property type="match status" value="1"/>
</dbReference>
<dbReference type="PIRSF" id="PIRSF000114">
    <property type="entry name" value="Glycerol-3-P_dh"/>
    <property type="match status" value="1"/>
</dbReference>
<dbReference type="PRINTS" id="PR00077">
    <property type="entry name" value="GPDHDRGNASE"/>
</dbReference>
<dbReference type="SUPFAM" id="SSF48179">
    <property type="entry name" value="6-phosphogluconate dehydrogenase C-terminal domain-like"/>
    <property type="match status" value="1"/>
</dbReference>
<dbReference type="SUPFAM" id="SSF51735">
    <property type="entry name" value="NAD(P)-binding Rossmann-fold domains"/>
    <property type="match status" value="1"/>
</dbReference>
<dbReference type="PROSITE" id="PS00957">
    <property type="entry name" value="NAD_G3PDH"/>
    <property type="match status" value="1"/>
</dbReference>
<keyword id="KW-0963">Cytoplasm</keyword>
<keyword id="KW-0444">Lipid biosynthesis</keyword>
<keyword id="KW-0443">Lipid metabolism</keyword>
<keyword id="KW-0520">NAD</keyword>
<keyword id="KW-0521">NADP</keyword>
<keyword id="KW-0547">Nucleotide-binding</keyword>
<keyword id="KW-0560">Oxidoreductase</keyword>
<keyword id="KW-0594">Phospholipid biosynthesis</keyword>
<keyword id="KW-1208">Phospholipid metabolism</keyword>
<keyword id="KW-1185">Reference proteome</keyword>
<gene>
    <name evidence="1" type="primary">gpsA</name>
    <name type="ordered locus">AHA_0296</name>
</gene>
<evidence type="ECO:0000255" key="1">
    <source>
        <dbReference type="HAMAP-Rule" id="MF_00394"/>
    </source>
</evidence>
<proteinExistence type="inferred from homology"/>
<accession>A0KF08</accession>
<name>GPDA_AERHH</name>
<sequence length="334" mass="35341">MADQIAISVLGAGSYGSALAISLARNGHPTLLWGHDPAHVAELEQDRCNKAFLPDVPFPADLQLTADLQQAVQAAPVLLLVVPSHVFGQVLAQVKPFLRPDTRIAWATKGLEPDSGRLLQDVAREVLGDEMPLAVISGPTFAKELAAGLPTAISVASTHDDFADDLSLLLHCGRSFRVYTNPDFIGLQLGGAVKNVIAIGAGLSDGLGFGANARTALITRGLVEMQRLGAALGADAKTFMGMAGLGDLVLTCTDNQSRNRRFGLALGAGKDVNTAMAEIGQVVEGYRNTKEVHLLAARCGVEMPICEQIFKVLYEGKNPKEAAIALLSRDKKDE</sequence>
<organism>
    <name type="scientific">Aeromonas hydrophila subsp. hydrophila (strain ATCC 7966 / DSM 30187 / BCRC 13018 / CCUG 14551 / JCM 1027 / KCTC 2358 / NCIMB 9240 / NCTC 8049)</name>
    <dbReference type="NCBI Taxonomy" id="380703"/>
    <lineage>
        <taxon>Bacteria</taxon>
        <taxon>Pseudomonadati</taxon>
        <taxon>Pseudomonadota</taxon>
        <taxon>Gammaproteobacteria</taxon>
        <taxon>Aeromonadales</taxon>
        <taxon>Aeromonadaceae</taxon>
        <taxon>Aeromonas</taxon>
    </lineage>
</organism>
<comment type="function">
    <text evidence="1">Catalyzes the reduction of the glycolytic intermediate dihydroxyacetone phosphate (DHAP) to sn-glycerol 3-phosphate (G3P), the key precursor for phospholipid synthesis.</text>
</comment>
<comment type="catalytic activity">
    <reaction evidence="1">
        <text>sn-glycerol 3-phosphate + NAD(+) = dihydroxyacetone phosphate + NADH + H(+)</text>
        <dbReference type="Rhea" id="RHEA:11092"/>
        <dbReference type="ChEBI" id="CHEBI:15378"/>
        <dbReference type="ChEBI" id="CHEBI:57540"/>
        <dbReference type="ChEBI" id="CHEBI:57597"/>
        <dbReference type="ChEBI" id="CHEBI:57642"/>
        <dbReference type="ChEBI" id="CHEBI:57945"/>
        <dbReference type="EC" id="1.1.1.94"/>
    </reaction>
    <physiologicalReaction direction="right-to-left" evidence="1">
        <dbReference type="Rhea" id="RHEA:11094"/>
    </physiologicalReaction>
</comment>
<comment type="catalytic activity">
    <reaction evidence="1">
        <text>sn-glycerol 3-phosphate + NADP(+) = dihydroxyacetone phosphate + NADPH + H(+)</text>
        <dbReference type="Rhea" id="RHEA:11096"/>
        <dbReference type="ChEBI" id="CHEBI:15378"/>
        <dbReference type="ChEBI" id="CHEBI:57597"/>
        <dbReference type="ChEBI" id="CHEBI:57642"/>
        <dbReference type="ChEBI" id="CHEBI:57783"/>
        <dbReference type="ChEBI" id="CHEBI:58349"/>
        <dbReference type="EC" id="1.1.1.94"/>
    </reaction>
    <physiologicalReaction direction="right-to-left" evidence="1">
        <dbReference type="Rhea" id="RHEA:11098"/>
    </physiologicalReaction>
</comment>
<comment type="pathway">
    <text evidence="1">Membrane lipid metabolism; glycerophospholipid metabolism.</text>
</comment>
<comment type="subcellular location">
    <subcellularLocation>
        <location evidence="1">Cytoplasm</location>
    </subcellularLocation>
</comment>
<comment type="similarity">
    <text evidence="1">Belongs to the NAD-dependent glycerol-3-phosphate dehydrogenase family.</text>
</comment>
<protein>
    <recommendedName>
        <fullName evidence="1">Glycerol-3-phosphate dehydrogenase [NAD(P)+]</fullName>
        <ecNumber evidence="1">1.1.1.94</ecNumber>
    </recommendedName>
    <alternativeName>
        <fullName evidence="1">NAD(P)(+)-dependent glycerol-3-phosphate dehydrogenase</fullName>
    </alternativeName>
    <alternativeName>
        <fullName evidence="1">NAD(P)H-dependent dihydroxyacetone-phosphate reductase</fullName>
    </alternativeName>
</protein>